<comment type="function">
    <text evidence="1">Catalyzes the conversion of acetate into acetyl-CoA (AcCoA), an essential intermediate at the junction of anabolic and catabolic pathways. AcsA undergoes a two-step reaction. In the first half reaction, AcsA combines acetate with ATP to form acetyl-adenylate (AcAMP) intermediate. In the second half reaction, it can then transfer the acetyl group from AcAMP to the sulfhydryl group of CoA, forming the product AcCoA.</text>
</comment>
<comment type="catalytic activity">
    <reaction evidence="1">
        <text>acetate + ATP + CoA = acetyl-CoA + AMP + diphosphate</text>
        <dbReference type="Rhea" id="RHEA:23176"/>
        <dbReference type="ChEBI" id="CHEBI:30089"/>
        <dbReference type="ChEBI" id="CHEBI:30616"/>
        <dbReference type="ChEBI" id="CHEBI:33019"/>
        <dbReference type="ChEBI" id="CHEBI:57287"/>
        <dbReference type="ChEBI" id="CHEBI:57288"/>
        <dbReference type="ChEBI" id="CHEBI:456215"/>
        <dbReference type="EC" id="6.2.1.1"/>
    </reaction>
</comment>
<comment type="cofactor">
    <cofactor evidence="1">
        <name>Mg(2+)</name>
        <dbReference type="ChEBI" id="CHEBI:18420"/>
    </cofactor>
</comment>
<comment type="PTM">
    <text evidence="1">Acetylated. Deacetylation by the SIR2-homolog deacetylase activates the enzyme.</text>
</comment>
<comment type="similarity">
    <text evidence="1">Belongs to the ATP-dependent AMP-binding enzyme family.</text>
</comment>
<proteinExistence type="inferred from homology"/>
<keyword id="KW-0007">Acetylation</keyword>
<keyword id="KW-0067">ATP-binding</keyword>
<keyword id="KW-0436">Ligase</keyword>
<keyword id="KW-0460">Magnesium</keyword>
<keyword id="KW-0479">Metal-binding</keyword>
<keyword id="KW-0547">Nucleotide-binding</keyword>
<feature type="chain" id="PRO_1000065326" description="Acetyl-coenzyme A synthetase">
    <location>
        <begin position="1"/>
        <end position="649"/>
    </location>
</feature>
<feature type="binding site" evidence="1">
    <location>
        <begin position="189"/>
        <end position="192"/>
    </location>
    <ligand>
        <name>CoA</name>
        <dbReference type="ChEBI" id="CHEBI:57287"/>
    </ligand>
</feature>
<feature type="binding site" evidence="1">
    <location>
        <position position="311"/>
    </location>
    <ligand>
        <name>CoA</name>
        <dbReference type="ChEBI" id="CHEBI:57287"/>
    </ligand>
</feature>
<feature type="binding site" evidence="1">
    <location>
        <position position="335"/>
    </location>
    <ligand>
        <name>CoA</name>
        <dbReference type="ChEBI" id="CHEBI:57287"/>
    </ligand>
</feature>
<feature type="binding site" evidence="1">
    <location>
        <begin position="387"/>
        <end position="389"/>
    </location>
    <ligand>
        <name>ATP</name>
        <dbReference type="ChEBI" id="CHEBI:30616"/>
    </ligand>
</feature>
<feature type="binding site" evidence="1">
    <location>
        <begin position="411"/>
        <end position="416"/>
    </location>
    <ligand>
        <name>ATP</name>
        <dbReference type="ChEBI" id="CHEBI:30616"/>
    </ligand>
</feature>
<feature type="binding site" evidence="1">
    <location>
        <position position="500"/>
    </location>
    <ligand>
        <name>ATP</name>
        <dbReference type="ChEBI" id="CHEBI:30616"/>
    </ligand>
</feature>
<feature type="binding site" evidence="1">
    <location>
        <position position="515"/>
    </location>
    <ligand>
        <name>ATP</name>
        <dbReference type="ChEBI" id="CHEBI:30616"/>
    </ligand>
</feature>
<feature type="binding site" evidence="1">
    <location>
        <position position="523"/>
    </location>
    <ligand>
        <name>CoA</name>
        <dbReference type="ChEBI" id="CHEBI:57287"/>
    </ligand>
</feature>
<feature type="binding site" evidence="1">
    <location>
        <position position="526"/>
    </location>
    <ligand>
        <name>ATP</name>
        <dbReference type="ChEBI" id="CHEBI:30616"/>
    </ligand>
</feature>
<feature type="binding site" evidence="1">
    <location>
        <position position="537"/>
    </location>
    <ligand>
        <name>Mg(2+)</name>
        <dbReference type="ChEBI" id="CHEBI:18420"/>
    </ligand>
</feature>
<feature type="binding site" evidence="1">
    <location>
        <position position="539"/>
    </location>
    <ligand>
        <name>Mg(2+)</name>
        <dbReference type="ChEBI" id="CHEBI:18420"/>
    </ligand>
</feature>
<feature type="binding site" evidence="1">
    <location>
        <position position="542"/>
    </location>
    <ligand>
        <name>Mg(2+)</name>
        <dbReference type="ChEBI" id="CHEBI:18420"/>
    </ligand>
</feature>
<feature type="binding site" evidence="1">
    <location>
        <position position="584"/>
    </location>
    <ligand>
        <name>CoA</name>
        <dbReference type="ChEBI" id="CHEBI:57287"/>
    </ligand>
</feature>
<feature type="modified residue" description="N6-acetyllysine" evidence="1">
    <location>
        <position position="609"/>
    </location>
</feature>
<dbReference type="EC" id="6.2.1.1" evidence="1"/>
<dbReference type="EMBL" id="CP000738">
    <property type="protein sequence ID" value="ABR62018.1"/>
    <property type="molecule type" value="Genomic_DNA"/>
</dbReference>
<dbReference type="RefSeq" id="YP_001328853.1">
    <property type="nucleotide sequence ID" value="NC_009636.1"/>
</dbReference>
<dbReference type="SMR" id="A6UED8"/>
<dbReference type="STRING" id="366394.Smed_3194"/>
<dbReference type="KEGG" id="smd:Smed_3194"/>
<dbReference type="PATRIC" id="fig|366394.8.peg.6432"/>
<dbReference type="eggNOG" id="COG0365">
    <property type="taxonomic scope" value="Bacteria"/>
</dbReference>
<dbReference type="HOGENOM" id="CLU_000022_3_6_5"/>
<dbReference type="OrthoDB" id="9803968at2"/>
<dbReference type="Proteomes" id="UP000001108">
    <property type="component" value="Chromosome"/>
</dbReference>
<dbReference type="GO" id="GO:0005829">
    <property type="term" value="C:cytosol"/>
    <property type="evidence" value="ECO:0007669"/>
    <property type="project" value="TreeGrafter"/>
</dbReference>
<dbReference type="GO" id="GO:0003987">
    <property type="term" value="F:acetate-CoA ligase activity"/>
    <property type="evidence" value="ECO:0007669"/>
    <property type="project" value="UniProtKB-UniRule"/>
</dbReference>
<dbReference type="GO" id="GO:0016208">
    <property type="term" value="F:AMP binding"/>
    <property type="evidence" value="ECO:0007669"/>
    <property type="project" value="InterPro"/>
</dbReference>
<dbReference type="GO" id="GO:0005524">
    <property type="term" value="F:ATP binding"/>
    <property type="evidence" value="ECO:0007669"/>
    <property type="project" value="UniProtKB-KW"/>
</dbReference>
<dbReference type="GO" id="GO:0046872">
    <property type="term" value="F:metal ion binding"/>
    <property type="evidence" value="ECO:0007669"/>
    <property type="project" value="UniProtKB-KW"/>
</dbReference>
<dbReference type="GO" id="GO:0019427">
    <property type="term" value="P:acetyl-CoA biosynthetic process from acetate"/>
    <property type="evidence" value="ECO:0007669"/>
    <property type="project" value="InterPro"/>
</dbReference>
<dbReference type="CDD" id="cd05966">
    <property type="entry name" value="ACS"/>
    <property type="match status" value="1"/>
</dbReference>
<dbReference type="FunFam" id="3.30.300.30:FF:000004">
    <property type="entry name" value="Acetyl-coenzyme A synthetase"/>
    <property type="match status" value="1"/>
</dbReference>
<dbReference type="FunFam" id="3.40.50.12780:FF:000001">
    <property type="entry name" value="Acetyl-coenzyme A synthetase"/>
    <property type="match status" value="1"/>
</dbReference>
<dbReference type="Gene3D" id="3.30.300.30">
    <property type="match status" value="1"/>
</dbReference>
<dbReference type="Gene3D" id="3.40.50.12780">
    <property type="entry name" value="N-terminal domain of ligase-like"/>
    <property type="match status" value="1"/>
</dbReference>
<dbReference type="HAMAP" id="MF_01123">
    <property type="entry name" value="Ac_CoA_synth"/>
    <property type="match status" value="1"/>
</dbReference>
<dbReference type="InterPro" id="IPR011904">
    <property type="entry name" value="Ac_CoA_lig"/>
</dbReference>
<dbReference type="InterPro" id="IPR032387">
    <property type="entry name" value="ACAS_N"/>
</dbReference>
<dbReference type="InterPro" id="IPR025110">
    <property type="entry name" value="AMP-bd_C"/>
</dbReference>
<dbReference type="InterPro" id="IPR045851">
    <property type="entry name" value="AMP-bd_C_sf"/>
</dbReference>
<dbReference type="InterPro" id="IPR020845">
    <property type="entry name" value="AMP-binding_CS"/>
</dbReference>
<dbReference type="InterPro" id="IPR000873">
    <property type="entry name" value="AMP-dep_synth/lig_dom"/>
</dbReference>
<dbReference type="InterPro" id="IPR042099">
    <property type="entry name" value="ANL_N_sf"/>
</dbReference>
<dbReference type="NCBIfam" id="TIGR02188">
    <property type="entry name" value="Ac_CoA_lig_AcsA"/>
    <property type="match status" value="1"/>
</dbReference>
<dbReference type="NCBIfam" id="NF001208">
    <property type="entry name" value="PRK00174.1"/>
    <property type="match status" value="1"/>
</dbReference>
<dbReference type="PANTHER" id="PTHR24095">
    <property type="entry name" value="ACETYL-COENZYME A SYNTHETASE"/>
    <property type="match status" value="1"/>
</dbReference>
<dbReference type="PANTHER" id="PTHR24095:SF14">
    <property type="entry name" value="ACETYL-COENZYME A SYNTHETASE 1"/>
    <property type="match status" value="1"/>
</dbReference>
<dbReference type="Pfam" id="PF16177">
    <property type="entry name" value="ACAS_N"/>
    <property type="match status" value="1"/>
</dbReference>
<dbReference type="Pfam" id="PF00501">
    <property type="entry name" value="AMP-binding"/>
    <property type="match status" value="1"/>
</dbReference>
<dbReference type="Pfam" id="PF13193">
    <property type="entry name" value="AMP-binding_C"/>
    <property type="match status" value="1"/>
</dbReference>
<dbReference type="SUPFAM" id="SSF56801">
    <property type="entry name" value="Acetyl-CoA synthetase-like"/>
    <property type="match status" value="1"/>
</dbReference>
<dbReference type="PROSITE" id="PS00455">
    <property type="entry name" value="AMP_BINDING"/>
    <property type="match status" value="1"/>
</dbReference>
<protein>
    <recommendedName>
        <fullName evidence="1">Acetyl-coenzyme A synthetase</fullName>
        <shortName evidence="1">AcCoA synthetase</shortName>
        <shortName evidence="1">Acs</shortName>
        <ecNumber evidence="1">6.2.1.1</ecNumber>
    </recommendedName>
    <alternativeName>
        <fullName evidence="1">Acetate--CoA ligase</fullName>
    </alternativeName>
    <alternativeName>
        <fullName evidence="1">Acyl-activating enzyme</fullName>
    </alternativeName>
</protein>
<name>ACSA_SINMW</name>
<evidence type="ECO:0000255" key="1">
    <source>
        <dbReference type="HAMAP-Rule" id="MF_01123"/>
    </source>
</evidence>
<gene>
    <name evidence="1" type="primary">acsA</name>
    <name type="ordered locus">Smed_3194</name>
</gene>
<accession>A6UED8</accession>
<organism>
    <name type="scientific">Sinorhizobium medicae (strain WSM419)</name>
    <name type="common">Ensifer medicae</name>
    <dbReference type="NCBI Taxonomy" id="366394"/>
    <lineage>
        <taxon>Bacteria</taxon>
        <taxon>Pseudomonadati</taxon>
        <taxon>Pseudomonadota</taxon>
        <taxon>Alphaproteobacteria</taxon>
        <taxon>Hyphomicrobiales</taxon>
        <taxon>Rhizobiaceae</taxon>
        <taxon>Sinorhizobium/Ensifer group</taxon>
        <taxon>Sinorhizobium</taxon>
    </lineage>
</organism>
<reference key="1">
    <citation type="submission" date="2007-06" db="EMBL/GenBank/DDBJ databases">
        <title>Complete sequence of Sinorhizobium medicae WSM419 chromosome.</title>
        <authorList>
            <consortium name="US DOE Joint Genome Institute"/>
            <person name="Copeland A."/>
            <person name="Lucas S."/>
            <person name="Lapidus A."/>
            <person name="Barry K."/>
            <person name="Glavina del Rio T."/>
            <person name="Dalin E."/>
            <person name="Tice H."/>
            <person name="Pitluck S."/>
            <person name="Chain P."/>
            <person name="Malfatti S."/>
            <person name="Shin M."/>
            <person name="Vergez L."/>
            <person name="Schmutz J."/>
            <person name="Larimer F."/>
            <person name="Land M."/>
            <person name="Hauser L."/>
            <person name="Kyrpides N."/>
            <person name="Mikhailova N."/>
            <person name="Reeve W.G."/>
            <person name="Richardson P."/>
        </authorList>
    </citation>
    <scope>NUCLEOTIDE SEQUENCE [LARGE SCALE GENOMIC DNA]</scope>
    <source>
        <strain>WSM419</strain>
    </source>
</reference>
<sequence>MDVKTYPVLEAAKNRTLLDNETYLKWYQESVADPETFWGEHGKRIDWFEPYTKVKNTTFEGDVSIKWFEDGLTNVSYNCIDRHLKAHGDKTAIIWEGDNPYLDKKITYNELYDTVCRLANVLKKHGVKKGDRVTIYMPMIPEAAYAMLACTRIGAVHSVVFGGFSPEALAGRIVDCESTFVITCDEGVRGGKPVALKENTDTAVGIAAKQNVTVGKVLVVRRTGGKVGWAPERDLWYHQETAAVEPHCPPERMNAEDPLFILYTSGSTGKPKGVLHTTGGYLVYASMTHQYVFDYQDGDIYWCTADVGWVTGHSYIVYGPLANAATTLMFEGVPNFPDAGRFWEVVDKHKVNIFYTAPTAIRSLMGAGDDFVKRSSRSSLRLLGTVGEPINPEAWEWYYHVVGDERCPVVDTWWQTETGGILITPLPGATDLKPGSATRPFFGVQPQIVDGEGNVVEGAADGNLCIIDSWPGQMRTVYGDHERFIQTYFSTYKGKYFTGDGCRRDEDGYYWITGRVDDVLNVSGHRLGTAEVESALVSHQLVSEAAVVGYPHSIKGQGIYCYVSLMAGEVGNDELRQALVKHVRSEIGPIATPDKIQFAPGLPKTRSGKIMRRILRKIAEDDFGSLGDTSTLADPSVVDDLIANRQNRA</sequence>